<dbReference type="EC" id="6.1.1.7" evidence="1"/>
<dbReference type="EMBL" id="CP000454">
    <property type="protein sequence ID" value="ABK03658.1"/>
    <property type="molecule type" value="Genomic_DNA"/>
</dbReference>
<dbReference type="RefSeq" id="WP_011692122.1">
    <property type="nucleotide sequence ID" value="NC_008541.1"/>
</dbReference>
<dbReference type="SMR" id="A0JX88"/>
<dbReference type="STRING" id="290399.Arth_2278"/>
<dbReference type="KEGG" id="art:Arth_2278"/>
<dbReference type="eggNOG" id="COG0013">
    <property type="taxonomic scope" value="Bacteria"/>
</dbReference>
<dbReference type="HOGENOM" id="CLU_004485_1_1_11"/>
<dbReference type="OrthoDB" id="9803884at2"/>
<dbReference type="Proteomes" id="UP000000754">
    <property type="component" value="Chromosome"/>
</dbReference>
<dbReference type="GO" id="GO:0005829">
    <property type="term" value="C:cytosol"/>
    <property type="evidence" value="ECO:0007669"/>
    <property type="project" value="TreeGrafter"/>
</dbReference>
<dbReference type="GO" id="GO:0004813">
    <property type="term" value="F:alanine-tRNA ligase activity"/>
    <property type="evidence" value="ECO:0007669"/>
    <property type="project" value="UniProtKB-UniRule"/>
</dbReference>
<dbReference type="GO" id="GO:0002161">
    <property type="term" value="F:aminoacyl-tRNA deacylase activity"/>
    <property type="evidence" value="ECO:0007669"/>
    <property type="project" value="TreeGrafter"/>
</dbReference>
<dbReference type="GO" id="GO:0005524">
    <property type="term" value="F:ATP binding"/>
    <property type="evidence" value="ECO:0007669"/>
    <property type="project" value="UniProtKB-UniRule"/>
</dbReference>
<dbReference type="GO" id="GO:0000049">
    <property type="term" value="F:tRNA binding"/>
    <property type="evidence" value="ECO:0007669"/>
    <property type="project" value="UniProtKB-KW"/>
</dbReference>
<dbReference type="GO" id="GO:0008270">
    <property type="term" value="F:zinc ion binding"/>
    <property type="evidence" value="ECO:0007669"/>
    <property type="project" value="UniProtKB-UniRule"/>
</dbReference>
<dbReference type="GO" id="GO:0006419">
    <property type="term" value="P:alanyl-tRNA aminoacylation"/>
    <property type="evidence" value="ECO:0007669"/>
    <property type="project" value="UniProtKB-UniRule"/>
</dbReference>
<dbReference type="CDD" id="cd00673">
    <property type="entry name" value="AlaRS_core"/>
    <property type="match status" value="1"/>
</dbReference>
<dbReference type="FunFam" id="3.10.310.40:FF:000001">
    <property type="entry name" value="Alanine--tRNA ligase"/>
    <property type="match status" value="1"/>
</dbReference>
<dbReference type="FunFam" id="3.30.54.20:FF:000001">
    <property type="entry name" value="Alanine--tRNA ligase"/>
    <property type="match status" value="1"/>
</dbReference>
<dbReference type="FunFam" id="3.30.930.10:FF:000004">
    <property type="entry name" value="Alanine--tRNA ligase"/>
    <property type="match status" value="1"/>
</dbReference>
<dbReference type="FunFam" id="3.30.980.10:FF:000004">
    <property type="entry name" value="Alanine--tRNA ligase, cytoplasmic"/>
    <property type="match status" value="1"/>
</dbReference>
<dbReference type="Gene3D" id="2.40.30.130">
    <property type="match status" value="1"/>
</dbReference>
<dbReference type="Gene3D" id="3.10.310.40">
    <property type="match status" value="1"/>
</dbReference>
<dbReference type="Gene3D" id="3.30.54.20">
    <property type="match status" value="1"/>
</dbReference>
<dbReference type="Gene3D" id="6.10.250.550">
    <property type="match status" value="1"/>
</dbReference>
<dbReference type="Gene3D" id="3.30.930.10">
    <property type="entry name" value="Bira Bifunctional Protein, Domain 2"/>
    <property type="match status" value="1"/>
</dbReference>
<dbReference type="Gene3D" id="3.30.980.10">
    <property type="entry name" value="Threonyl-trna Synthetase, Chain A, domain 2"/>
    <property type="match status" value="1"/>
</dbReference>
<dbReference type="HAMAP" id="MF_00036_B">
    <property type="entry name" value="Ala_tRNA_synth_B"/>
    <property type="match status" value="1"/>
</dbReference>
<dbReference type="InterPro" id="IPR045864">
    <property type="entry name" value="aa-tRNA-synth_II/BPL/LPL"/>
</dbReference>
<dbReference type="InterPro" id="IPR002318">
    <property type="entry name" value="Ala-tRNA-lgiase_IIc"/>
</dbReference>
<dbReference type="InterPro" id="IPR018162">
    <property type="entry name" value="Ala-tRNA-ligase_IIc_anticod-bd"/>
</dbReference>
<dbReference type="InterPro" id="IPR018165">
    <property type="entry name" value="Ala-tRNA-synth_IIc_core"/>
</dbReference>
<dbReference type="InterPro" id="IPR018164">
    <property type="entry name" value="Ala-tRNA-synth_IIc_N"/>
</dbReference>
<dbReference type="InterPro" id="IPR050058">
    <property type="entry name" value="Ala-tRNA_ligase"/>
</dbReference>
<dbReference type="InterPro" id="IPR023033">
    <property type="entry name" value="Ala_tRNA_ligase_euk/bac"/>
</dbReference>
<dbReference type="InterPro" id="IPR003156">
    <property type="entry name" value="DHHA1_dom"/>
</dbReference>
<dbReference type="InterPro" id="IPR018163">
    <property type="entry name" value="Thr/Ala-tRNA-synth_IIc_edit"/>
</dbReference>
<dbReference type="InterPro" id="IPR009000">
    <property type="entry name" value="Transl_B-barrel_sf"/>
</dbReference>
<dbReference type="InterPro" id="IPR012947">
    <property type="entry name" value="tRNA_SAD"/>
</dbReference>
<dbReference type="NCBIfam" id="TIGR00344">
    <property type="entry name" value="alaS"/>
    <property type="match status" value="1"/>
</dbReference>
<dbReference type="PANTHER" id="PTHR11777:SF9">
    <property type="entry name" value="ALANINE--TRNA LIGASE, CYTOPLASMIC"/>
    <property type="match status" value="1"/>
</dbReference>
<dbReference type="PANTHER" id="PTHR11777">
    <property type="entry name" value="ALANYL-TRNA SYNTHETASE"/>
    <property type="match status" value="1"/>
</dbReference>
<dbReference type="Pfam" id="PF02272">
    <property type="entry name" value="DHHA1"/>
    <property type="match status" value="1"/>
</dbReference>
<dbReference type="Pfam" id="PF01411">
    <property type="entry name" value="tRNA-synt_2c"/>
    <property type="match status" value="1"/>
</dbReference>
<dbReference type="Pfam" id="PF07973">
    <property type="entry name" value="tRNA_SAD"/>
    <property type="match status" value="1"/>
</dbReference>
<dbReference type="PRINTS" id="PR00980">
    <property type="entry name" value="TRNASYNTHALA"/>
</dbReference>
<dbReference type="SMART" id="SM00863">
    <property type="entry name" value="tRNA_SAD"/>
    <property type="match status" value="1"/>
</dbReference>
<dbReference type="SUPFAM" id="SSF55681">
    <property type="entry name" value="Class II aaRS and biotin synthetases"/>
    <property type="match status" value="1"/>
</dbReference>
<dbReference type="SUPFAM" id="SSF101353">
    <property type="entry name" value="Putative anticodon-binding domain of alanyl-tRNA synthetase (AlaRS)"/>
    <property type="match status" value="1"/>
</dbReference>
<dbReference type="SUPFAM" id="SSF55186">
    <property type="entry name" value="ThrRS/AlaRS common domain"/>
    <property type="match status" value="1"/>
</dbReference>
<dbReference type="SUPFAM" id="SSF50447">
    <property type="entry name" value="Translation proteins"/>
    <property type="match status" value="1"/>
</dbReference>
<dbReference type="PROSITE" id="PS50860">
    <property type="entry name" value="AA_TRNA_LIGASE_II_ALA"/>
    <property type="match status" value="1"/>
</dbReference>
<gene>
    <name evidence="1" type="primary">alaS</name>
    <name type="ordered locus">Arth_2278</name>
</gene>
<keyword id="KW-0030">Aminoacyl-tRNA synthetase</keyword>
<keyword id="KW-0067">ATP-binding</keyword>
<keyword id="KW-0963">Cytoplasm</keyword>
<keyword id="KW-0436">Ligase</keyword>
<keyword id="KW-0479">Metal-binding</keyword>
<keyword id="KW-0547">Nucleotide-binding</keyword>
<keyword id="KW-0648">Protein biosynthesis</keyword>
<keyword id="KW-1185">Reference proteome</keyword>
<keyword id="KW-0694">RNA-binding</keyword>
<keyword id="KW-0820">tRNA-binding</keyword>
<keyword id="KW-0862">Zinc</keyword>
<name>SYA_ARTS2</name>
<protein>
    <recommendedName>
        <fullName evidence="1">Alanine--tRNA ligase</fullName>
        <ecNumber evidence="1">6.1.1.7</ecNumber>
    </recommendedName>
    <alternativeName>
        <fullName evidence="1">Alanyl-tRNA synthetase</fullName>
        <shortName evidence="1">AlaRS</shortName>
    </alternativeName>
</protein>
<reference key="1">
    <citation type="journal article" date="2013" name="Stand. Genomic Sci.">
        <title>Complete genome sequence of Arthrobacter sp. strain FB24.</title>
        <authorList>
            <person name="Nakatsu C.H."/>
            <person name="Barabote R."/>
            <person name="Thompson S."/>
            <person name="Bruce D."/>
            <person name="Detter C."/>
            <person name="Brettin T."/>
            <person name="Han C."/>
            <person name="Beasley F."/>
            <person name="Chen W."/>
            <person name="Konopka A."/>
            <person name="Xie G."/>
        </authorList>
    </citation>
    <scope>NUCLEOTIDE SEQUENCE [LARGE SCALE GENOMIC DNA]</scope>
    <source>
        <strain>FB24</strain>
    </source>
</reference>
<organism>
    <name type="scientific">Arthrobacter sp. (strain FB24)</name>
    <dbReference type="NCBI Taxonomy" id="290399"/>
    <lineage>
        <taxon>Bacteria</taxon>
        <taxon>Bacillati</taxon>
        <taxon>Actinomycetota</taxon>
        <taxon>Actinomycetes</taxon>
        <taxon>Micrococcales</taxon>
        <taxon>Micrococcaceae</taxon>
        <taxon>Arthrobacter</taxon>
    </lineage>
</organism>
<evidence type="ECO:0000255" key="1">
    <source>
        <dbReference type="HAMAP-Rule" id="MF_00036"/>
    </source>
</evidence>
<accession>A0JX88</accession>
<feature type="chain" id="PRO_0000347493" description="Alanine--tRNA ligase">
    <location>
        <begin position="1"/>
        <end position="892"/>
    </location>
</feature>
<feature type="binding site" evidence="1">
    <location>
        <position position="577"/>
    </location>
    <ligand>
        <name>Zn(2+)</name>
        <dbReference type="ChEBI" id="CHEBI:29105"/>
    </ligand>
</feature>
<feature type="binding site" evidence="1">
    <location>
        <position position="581"/>
    </location>
    <ligand>
        <name>Zn(2+)</name>
        <dbReference type="ChEBI" id="CHEBI:29105"/>
    </ligand>
</feature>
<feature type="binding site" evidence="1">
    <location>
        <position position="680"/>
    </location>
    <ligand>
        <name>Zn(2+)</name>
        <dbReference type="ChEBI" id="CHEBI:29105"/>
    </ligand>
</feature>
<feature type="binding site" evidence="1">
    <location>
        <position position="684"/>
    </location>
    <ligand>
        <name>Zn(2+)</name>
        <dbReference type="ChEBI" id="CHEBI:29105"/>
    </ligand>
</feature>
<sequence length="892" mass="96049">MKSQEITKRWIDFFVSKGHTAVPSASLVSSDPSLLFTVAGMVPFIPYLTAREEAPYNRATSVQKCIRTGDIEEVGKTARHGTFFQMCGNFSFGDYFKEDAIKFAWELLTTSVDDGGYGLPPEKLWVTVYEEDDEAEQLWLKNTGMPAERIQRMGKADNYWSTGQPGPAGPCSEIYYDRGPSYGVEGGPIADENRYVEIWNLVFMQYQIDNVRSKVDFDITGELPKKNIDTGLGMERLAMILQDVENMYETDQVRPVIDKAAALSGKEYTSAESADDPHHTDDVRMRVVADHIRSALMLIADGVTPSNEGRGYVLRRLIRRAVRSMRLLGVEKACLPDLLPASRDAMKGVYPVVETDFDRISRIAYAEEKAFLRTIASGTARLEDAVKDSKAAGQPLSGADAFALHDTYGFPIDLTLEMAEEAGLKVDEPEFRKLMLEQRQRAQADAKGKKGSHADLSAFQELLAEGETVFTGYTELAGESKVRGILSGGRKVSQASTGEEIELVLAETPFYAEAGGQAADTGLITGDGFVVEVLDVQRPVKGLSVHKAIVREGEIGADSLVQAAVDRERRHSAEQAHTGTHIVHAALHQILGPEALQRGSYNKAGYLRFDFAWGEGLSAATRSEIEEVSNLAIRNNFQVETKVMALAEAKALGAMALFGENYGNEVRVVEIDGAWSRELCGGTHVANTSLIGSLSLLGDQSVGSGNRRVEAFVGMEAFRHLAAERALVTELTEMLKVPSGLLADRIATTLTKLKTVEKELERLRKEQLTAAAAQLVGTAKDAAGVKVIAHDAGQVSGADDLRGLALDLRTRLGSEAAAVAVAGVSNDRPVILVATNEAARAAGVKAGALVRLAAGILGGGGGGKDDVAQGGGTDAAKVPAALTAVVDAITRR</sequence>
<comment type="function">
    <text evidence="1">Catalyzes the attachment of alanine to tRNA(Ala) in a two-step reaction: alanine is first activated by ATP to form Ala-AMP and then transferred to the acceptor end of tRNA(Ala). Also edits incorrectly charged Ser-tRNA(Ala) and Gly-tRNA(Ala) via its editing domain.</text>
</comment>
<comment type="catalytic activity">
    <reaction evidence="1">
        <text>tRNA(Ala) + L-alanine + ATP = L-alanyl-tRNA(Ala) + AMP + diphosphate</text>
        <dbReference type="Rhea" id="RHEA:12540"/>
        <dbReference type="Rhea" id="RHEA-COMP:9657"/>
        <dbReference type="Rhea" id="RHEA-COMP:9923"/>
        <dbReference type="ChEBI" id="CHEBI:30616"/>
        <dbReference type="ChEBI" id="CHEBI:33019"/>
        <dbReference type="ChEBI" id="CHEBI:57972"/>
        <dbReference type="ChEBI" id="CHEBI:78442"/>
        <dbReference type="ChEBI" id="CHEBI:78497"/>
        <dbReference type="ChEBI" id="CHEBI:456215"/>
        <dbReference type="EC" id="6.1.1.7"/>
    </reaction>
</comment>
<comment type="cofactor">
    <cofactor evidence="1">
        <name>Zn(2+)</name>
        <dbReference type="ChEBI" id="CHEBI:29105"/>
    </cofactor>
    <text evidence="1">Binds 1 zinc ion per subunit.</text>
</comment>
<comment type="subcellular location">
    <subcellularLocation>
        <location evidence="1">Cytoplasm</location>
    </subcellularLocation>
</comment>
<comment type="domain">
    <text evidence="1">Consists of three domains; the N-terminal catalytic domain, the editing domain and the C-terminal C-Ala domain. The editing domain removes incorrectly charged amino acids, while the C-Ala domain, along with tRNA(Ala), serves as a bridge to cooperatively bring together the editing and aminoacylation centers thus stimulating deacylation of misacylated tRNAs.</text>
</comment>
<comment type="similarity">
    <text evidence="1">Belongs to the class-II aminoacyl-tRNA synthetase family.</text>
</comment>
<proteinExistence type="inferred from homology"/>